<organism>
    <name type="scientific">Zea mays</name>
    <name type="common">Maize</name>
    <dbReference type="NCBI Taxonomy" id="4577"/>
    <lineage>
        <taxon>Eukaryota</taxon>
        <taxon>Viridiplantae</taxon>
        <taxon>Streptophyta</taxon>
        <taxon>Embryophyta</taxon>
        <taxon>Tracheophyta</taxon>
        <taxon>Spermatophyta</taxon>
        <taxon>Magnoliopsida</taxon>
        <taxon>Liliopsida</taxon>
        <taxon>Poales</taxon>
        <taxon>Poaceae</taxon>
        <taxon>PACMAD clade</taxon>
        <taxon>Panicoideae</taxon>
        <taxon>Andropogonodae</taxon>
        <taxon>Andropogoneae</taxon>
        <taxon>Tripsacinae</taxon>
        <taxon>Zea</taxon>
    </lineage>
</organism>
<gene>
    <name type="primary">PIP1-5</name>
    <name type="synonym">PIP1E</name>
    <name type="synonym">PIP4</name>
</gene>
<feature type="chain" id="PRO_0000286016" description="Aquaporin PIP1-5">
    <location>
        <begin position="1"/>
        <end position="288"/>
    </location>
</feature>
<feature type="transmembrane region" description="Helical; Name=1" evidence="2">
    <location>
        <begin position="57"/>
        <end position="77"/>
    </location>
</feature>
<feature type="transmembrane region" description="Helical; Name=2" evidence="2">
    <location>
        <begin position="92"/>
        <end position="114"/>
    </location>
</feature>
<feature type="transmembrane region" description="Helical; Name=3" evidence="2">
    <location>
        <begin position="135"/>
        <end position="155"/>
    </location>
</feature>
<feature type="transmembrane region" description="Helical; Name=4" evidence="2">
    <location>
        <begin position="177"/>
        <end position="197"/>
    </location>
</feature>
<feature type="transmembrane region" description="Helical; Name=5" evidence="2">
    <location>
        <begin position="211"/>
        <end position="231"/>
    </location>
</feature>
<feature type="transmembrane region" description="Helical; Name=6" evidence="2">
    <location>
        <begin position="259"/>
        <end position="279"/>
    </location>
</feature>
<feature type="region of interest" description="Disordered" evidence="3">
    <location>
        <begin position="1"/>
        <end position="36"/>
    </location>
</feature>
<feature type="short sequence motif" description="NPA 1" evidence="1">
    <location>
        <begin position="116"/>
        <end position="118"/>
    </location>
</feature>
<feature type="short sequence motif" description="NPA 2" evidence="1">
    <location>
        <begin position="237"/>
        <end position="239"/>
    </location>
</feature>
<sequence>MEGKEEDVRLGANRYSERQPIGTAAQGTEEKDYKEPPPAPLFEAEELTSWSFYRAGIAEFVATFLFLYISILTVMGVSKSSSKCATVGIQGIAWSFGGMIFALVYCTAGISGGHINPAVTFGLFLARKLSLTRALFYMVMQCLGAICGAGVVKGFQEGLYMGAGGGANAVNPGYTKGDGLGAEIVGTFVLVYTVFSATDAKRSARDSHVPILAPLPIGFAVFLVHLATIPITGTGINPARSLGAAIVYNRSHAWNDHWIFWVGPFIGAALAAIYHVVIIRALPFKSRD</sequence>
<comment type="function">
    <text evidence="4">Water channel required to facilitate the transport of water across cell membrane.</text>
</comment>
<comment type="subcellular location">
    <subcellularLocation>
        <location evidence="1">Cell membrane</location>
        <topology evidence="1">Multi-pass membrane protein</topology>
    </subcellularLocation>
</comment>
<comment type="tissue specificity">
    <text evidence="4">Highly expressed in roots and at lower levels in anthers and silks.</text>
</comment>
<comment type="induction">
    <text evidence="4">By nitrate in roots. Expressed in roots with a circadian rhythm showing an increase at the end of the night period, a peak during the first part of the light period and then a decrease.</text>
</comment>
<comment type="domain">
    <text>Aquaporins contain two tandem repeats each containing three membrane-spanning domains and a pore-forming loop with the signature motif Asn-Pro-Ala (NPA).</text>
</comment>
<comment type="similarity">
    <text evidence="5">Belongs to the MIP/aquaporin (TC 1.A.8) family. PIP (TC 1.A.8.11) subfamily.</text>
</comment>
<name>PIP15_MAIZE</name>
<dbReference type="EMBL" id="AF326489">
    <property type="protein sequence ID" value="AAK26756.1"/>
    <property type="molecule type" value="mRNA"/>
</dbReference>
<dbReference type="EMBL" id="AJ271796">
    <property type="protein sequence ID" value="CAC33802.1"/>
    <property type="molecule type" value="mRNA"/>
</dbReference>
<dbReference type="RefSeq" id="NP_001105131.1">
    <property type="nucleotide sequence ID" value="NM_001111661.1"/>
</dbReference>
<dbReference type="SMR" id="Q9AR14"/>
<dbReference type="FunCoup" id="Q9AR14">
    <property type="interactions" value="386"/>
</dbReference>
<dbReference type="STRING" id="4577.Q9AR14"/>
<dbReference type="PaxDb" id="4577-GRMZM2G081843_P01"/>
<dbReference type="GeneID" id="542014"/>
<dbReference type="KEGG" id="zma:542014"/>
<dbReference type="MaizeGDB" id="403368"/>
<dbReference type="eggNOG" id="KOG0223">
    <property type="taxonomic scope" value="Eukaryota"/>
</dbReference>
<dbReference type="HOGENOM" id="CLU_020019_3_0_1"/>
<dbReference type="InParanoid" id="Q9AR14"/>
<dbReference type="OMA" id="WDPVNKE"/>
<dbReference type="OrthoDB" id="606627at2759"/>
<dbReference type="Proteomes" id="UP000007305">
    <property type="component" value="Unplaced"/>
</dbReference>
<dbReference type="ExpressionAtlas" id="Q9AR14">
    <property type="expression patterns" value="baseline and differential"/>
</dbReference>
<dbReference type="GO" id="GO:0016020">
    <property type="term" value="C:membrane"/>
    <property type="evidence" value="ECO:0000304"/>
    <property type="project" value="AgBase"/>
</dbReference>
<dbReference type="GO" id="GO:0005886">
    <property type="term" value="C:plasma membrane"/>
    <property type="evidence" value="ECO:0000318"/>
    <property type="project" value="GO_Central"/>
</dbReference>
<dbReference type="GO" id="GO:0015250">
    <property type="term" value="F:water channel activity"/>
    <property type="evidence" value="ECO:0000318"/>
    <property type="project" value="GO_Central"/>
</dbReference>
<dbReference type="GO" id="GO:0009414">
    <property type="term" value="P:response to water deprivation"/>
    <property type="evidence" value="ECO:0000318"/>
    <property type="project" value="GO_Central"/>
</dbReference>
<dbReference type="CDD" id="cd00333">
    <property type="entry name" value="MIP"/>
    <property type="match status" value="1"/>
</dbReference>
<dbReference type="FunFam" id="1.20.1080.10:FF:000001">
    <property type="entry name" value="Probable aquaporin PIP1-2"/>
    <property type="match status" value="1"/>
</dbReference>
<dbReference type="Gene3D" id="1.20.1080.10">
    <property type="entry name" value="Glycerol uptake facilitator protein"/>
    <property type="match status" value="1"/>
</dbReference>
<dbReference type="InterPro" id="IPR023271">
    <property type="entry name" value="Aquaporin-like"/>
</dbReference>
<dbReference type="InterPro" id="IPR034294">
    <property type="entry name" value="Aquaporin_transptr"/>
</dbReference>
<dbReference type="InterPro" id="IPR000425">
    <property type="entry name" value="MIP"/>
</dbReference>
<dbReference type="InterPro" id="IPR022357">
    <property type="entry name" value="MIP_CS"/>
</dbReference>
<dbReference type="NCBIfam" id="TIGR00861">
    <property type="entry name" value="MIP"/>
    <property type="match status" value="1"/>
</dbReference>
<dbReference type="PANTHER" id="PTHR45687">
    <property type="entry name" value="AQUAPORIN OR AQUAGLYCEROPORIN RELATED"/>
    <property type="match status" value="1"/>
</dbReference>
<dbReference type="Pfam" id="PF00230">
    <property type="entry name" value="MIP"/>
    <property type="match status" value="1"/>
</dbReference>
<dbReference type="PRINTS" id="PR00783">
    <property type="entry name" value="MINTRINSICP"/>
</dbReference>
<dbReference type="SUPFAM" id="SSF81338">
    <property type="entry name" value="Aquaporin-like"/>
    <property type="match status" value="1"/>
</dbReference>
<dbReference type="PROSITE" id="PS00221">
    <property type="entry name" value="MIP"/>
    <property type="match status" value="1"/>
</dbReference>
<evidence type="ECO:0000250" key="1"/>
<evidence type="ECO:0000255" key="2"/>
<evidence type="ECO:0000256" key="3">
    <source>
        <dbReference type="SAM" id="MobiDB-lite"/>
    </source>
</evidence>
<evidence type="ECO:0000269" key="4">
    <source ref="2"/>
</evidence>
<evidence type="ECO:0000305" key="5"/>
<proteinExistence type="evidence at transcript level"/>
<protein>
    <recommendedName>
        <fullName>Aquaporin PIP1-5</fullName>
    </recommendedName>
    <alternativeName>
        <fullName>Plasma membrane intrinsic protein 1-5</fullName>
    </alternativeName>
    <alternativeName>
        <fullName>ZmPIP1-5</fullName>
    </alternativeName>
    <alternativeName>
        <fullName>ZmPIP1-5b</fullName>
    </alternativeName>
    <alternativeName>
        <fullName>ZmPIP1;5</fullName>
    </alternativeName>
</protein>
<keyword id="KW-1003">Cell membrane</keyword>
<keyword id="KW-0472">Membrane</keyword>
<keyword id="KW-1185">Reference proteome</keyword>
<keyword id="KW-0677">Repeat</keyword>
<keyword id="KW-0812">Transmembrane</keyword>
<keyword id="KW-1133">Transmembrane helix</keyword>
<keyword id="KW-0813">Transport</keyword>
<reference key="1">
    <citation type="journal article" date="2001" name="Plant Physiol.">
        <title>Aquaporins constitute a large and highly divergent protein family in maize.</title>
        <authorList>
            <person name="Chaumont F."/>
            <person name="Barrieu F."/>
            <person name="Wojcik E."/>
            <person name="Chrispeels M.J."/>
            <person name="Jung R."/>
        </authorList>
    </citation>
    <scope>NUCLEOTIDE SEQUENCE [MRNA]</scope>
    <scope>GENE FAMILY</scope>
    <scope>NOMENCLATURE</scope>
    <source>
        <strain>cv. B73</strain>
    </source>
</reference>
<reference key="2">
    <citation type="journal article" date="2003" name="Plant Sci.">
        <title>Cloning and characterization of ZmPIP1-5b, an aquaporin transporting water and urea.</title>
        <authorList>
            <person name="Gaspar M."/>
            <person name="Sissoeff I."/>
            <person name="Bousser A."/>
            <person name="Roche O."/>
            <person name="Hoarau J."/>
            <person name="Mahe A."/>
        </authorList>
    </citation>
    <scope>NUCLEOTIDE SEQUENCE [MRNA]</scope>
    <scope>FUNCTION</scope>
    <scope>TISSUE SPECIFICITY</scope>
    <scope>INDUCTION</scope>
    <source>
        <tissue>Root</tissue>
    </source>
</reference>
<accession>Q9AR14</accession>